<sequence length="167" mass="18557">MELWLTGIVLKPRGLKGEVKVKPVTDYPEKFLSRKSYWVGGSPGDAVPLAVKHASLAGGFAWLFLEGVDSREKAEALAGRQLFIEASEAEPRKDDRAWLHELEGMKVLGAGRKEVGVLKEVLSMPAHEVYEIISGGRSVLVPAIEEFVEEISLEGRYIHVPRFDEFL</sequence>
<comment type="function">
    <text evidence="1">An accessory protein needed during the final step in the assembly of 30S ribosomal subunit, possibly for assembly of the head region. Essential for efficient processing of 16S rRNA. May be needed both before and after RbfA during the maturation of 16S rRNA. It has affinity for free ribosomal 30S subunits but not for 70S ribosomes.</text>
</comment>
<comment type="subunit">
    <text evidence="1">Binds ribosomal protein uS19.</text>
</comment>
<comment type="subcellular location">
    <subcellularLocation>
        <location evidence="1">Cytoplasm</location>
    </subcellularLocation>
</comment>
<comment type="domain">
    <text evidence="1">The PRC barrel domain binds ribosomal protein uS19.</text>
</comment>
<comment type="similarity">
    <text evidence="1">Belongs to the RimM family.</text>
</comment>
<keyword id="KW-0143">Chaperone</keyword>
<keyword id="KW-0963">Cytoplasm</keyword>
<keyword id="KW-1185">Reference proteome</keyword>
<keyword id="KW-0690">Ribosome biogenesis</keyword>
<keyword id="KW-0698">rRNA processing</keyword>
<feature type="chain" id="PRO_0000244145" description="Ribosome maturation factor RimM">
    <location>
        <begin position="1"/>
        <end position="167"/>
    </location>
</feature>
<feature type="domain" description="PRC barrel" evidence="1">
    <location>
        <begin position="94"/>
        <end position="166"/>
    </location>
</feature>
<name>RIMM_CHLL3</name>
<accession>Q3B4A2</accession>
<proteinExistence type="inferred from homology"/>
<gene>
    <name evidence="1" type="primary">rimM</name>
    <name type="ordered locus">Plut_0967</name>
</gene>
<reference key="1">
    <citation type="submission" date="2005-08" db="EMBL/GenBank/DDBJ databases">
        <title>Complete sequence of Pelodictyon luteolum DSM 273.</title>
        <authorList>
            <consortium name="US DOE Joint Genome Institute"/>
            <person name="Copeland A."/>
            <person name="Lucas S."/>
            <person name="Lapidus A."/>
            <person name="Barry K."/>
            <person name="Detter J.C."/>
            <person name="Glavina T."/>
            <person name="Hammon N."/>
            <person name="Israni S."/>
            <person name="Pitluck S."/>
            <person name="Bryant D."/>
            <person name="Schmutz J."/>
            <person name="Larimer F."/>
            <person name="Land M."/>
            <person name="Kyrpides N."/>
            <person name="Ivanova N."/>
            <person name="Richardson P."/>
        </authorList>
    </citation>
    <scope>NUCLEOTIDE SEQUENCE [LARGE SCALE GENOMIC DNA]</scope>
    <source>
        <strain>DSM 273 / BCRC 81028 / 2530</strain>
    </source>
</reference>
<organism>
    <name type="scientific">Chlorobium luteolum (strain DSM 273 / BCRC 81028 / 2530)</name>
    <name type="common">Pelodictyon luteolum</name>
    <dbReference type="NCBI Taxonomy" id="319225"/>
    <lineage>
        <taxon>Bacteria</taxon>
        <taxon>Pseudomonadati</taxon>
        <taxon>Chlorobiota</taxon>
        <taxon>Chlorobiia</taxon>
        <taxon>Chlorobiales</taxon>
        <taxon>Chlorobiaceae</taxon>
        <taxon>Chlorobium/Pelodictyon group</taxon>
        <taxon>Pelodictyon</taxon>
    </lineage>
</organism>
<evidence type="ECO:0000255" key="1">
    <source>
        <dbReference type="HAMAP-Rule" id="MF_00014"/>
    </source>
</evidence>
<protein>
    <recommendedName>
        <fullName evidence="1">Ribosome maturation factor RimM</fullName>
    </recommendedName>
</protein>
<dbReference type="EMBL" id="CP000096">
    <property type="protein sequence ID" value="ABB23829.1"/>
    <property type="molecule type" value="Genomic_DNA"/>
</dbReference>
<dbReference type="RefSeq" id="WP_011357703.1">
    <property type="nucleotide sequence ID" value="NC_007512.1"/>
</dbReference>
<dbReference type="SMR" id="Q3B4A2"/>
<dbReference type="STRING" id="319225.Plut_0967"/>
<dbReference type="KEGG" id="plt:Plut_0967"/>
<dbReference type="eggNOG" id="COG0806">
    <property type="taxonomic scope" value="Bacteria"/>
</dbReference>
<dbReference type="HOGENOM" id="CLU_077636_3_2_10"/>
<dbReference type="OrthoDB" id="9810331at2"/>
<dbReference type="Proteomes" id="UP000002709">
    <property type="component" value="Chromosome"/>
</dbReference>
<dbReference type="GO" id="GO:0005737">
    <property type="term" value="C:cytoplasm"/>
    <property type="evidence" value="ECO:0007669"/>
    <property type="project" value="UniProtKB-SubCell"/>
</dbReference>
<dbReference type="GO" id="GO:0005840">
    <property type="term" value="C:ribosome"/>
    <property type="evidence" value="ECO:0007669"/>
    <property type="project" value="InterPro"/>
</dbReference>
<dbReference type="GO" id="GO:0043022">
    <property type="term" value="F:ribosome binding"/>
    <property type="evidence" value="ECO:0007669"/>
    <property type="project" value="InterPro"/>
</dbReference>
<dbReference type="GO" id="GO:0042274">
    <property type="term" value="P:ribosomal small subunit biogenesis"/>
    <property type="evidence" value="ECO:0007669"/>
    <property type="project" value="UniProtKB-UniRule"/>
</dbReference>
<dbReference type="GO" id="GO:0006364">
    <property type="term" value="P:rRNA processing"/>
    <property type="evidence" value="ECO:0007669"/>
    <property type="project" value="UniProtKB-UniRule"/>
</dbReference>
<dbReference type="Gene3D" id="2.30.30.240">
    <property type="entry name" value="PRC-barrel domain"/>
    <property type="match status" value="1"/>
</dbReference>
<dbReference type="Gene3D" id="2.40.30.60">
    <property type="entry name" value="RimM"/>
    <property type="match status" value="1"/>
</dbReference>
<dbReference type="HAMAP" id="MF_00014">
    <property type="entry name" value="Ribosome_mat_RimM"/>
    <property type="match status" value="1"/>
</dbReference>
<dbReference type="InterPro" id="IPR011033">
    <property type="entry name" value="PRC_barrel-like_sf"/>
</dbReference>
<dbReference type="InterPro" id="IPR056792">
    <property type="entry name" value="PRC_RimM"/>
</dbReference>
<dbReference type="InterPro" id="IPR011961">
    <property type="entry name" value="RimM"/>
</dbReference>
<dbReference type="InterPro" id="IPR002676">
    <property type="entry name" value="RimM_N"/>
</dbReference>
<dbReference type="InterPro" id="IPR036976">
    <property type="entry name" value="RimM_N_sf"/>
</dbReference>
<dbReference type="InterPro" id="IPR009000">
    <property type="entry name" value="Transl_B-barrel_sf"/>
</dbReference>
<dbReference type="NCBIfam" id="TIGR02273">
    <property type="entry name" value="16S_RimM"/>
    <property type="match status" value="1"/>
</dbReference>
<dbReference type="PANTHER" id="PTHR33692">
    <property type="entry name" value="RIBOSOME MATURATION FACTOR RIMM"/>
    <property type="match status" value="1"/>
</dbReference>
<dbReference type="PANTHER" id="PTHR33692:SF1">
    <property type="entry name" value="RIBOSOME MATURATION FACTOR RIMM"/>
    <property type="match status" value="1"/>
</dbReference>
<dbReference type="Pfam" id="PF24986">
    <property type="entry name" value="PRC_RimM"/>
    <property type="match status" value="1"/>
</dbReference>
<dbReference type="Pfam" id="PF01782">
    <property type="entry name" value="RimM"/>
    <property type="match status" value="1"/>
</dbReference>
<dbReference type="SUPFAM" id="SSF50346">
    <property type="entry name" value="PRC-barrel domain"/>
    <property type="match status" value="1"/>
</dbReference>
<dbReference type="SUPFAM" id="SSF50447">
    <property type="entry name" value="Translation proteins"/>
    <property type="match status" value="1"/>
</dbReference>